<sequence length="838" mass="92482">MTMIETQLRSLLVTTKPIRDLTIDAVIAATKRAEQRIAPLWPLRYFVAVNPYLGLIDHTFADAAQLLARRTDARMTAPRDFYAQAIKSGRITDADLAAAIADEKLPSPAPASVAALKEFAFSKDPDPATTPLPTIADVATTVTGINWADFVTDAISTWAGAYFDLGQSYWRSPWAQLPAYAAWRAEAAHDRTAQARGVHGMRRALRELPETALETIVTAVKMLNIPEQGLEAYLHRLLLTIHGWASYARYLRWDAELYGGEDHTLTDLLAIRLVWEVALWHSFADRGVAEAWHKCKPELSNEQLTETARYALAGNILLQRAFEKSYQRQLFARLGTARPATTPQRKRVQAAFCIDVRSEIFRRALETTTDDIETIGFAGFFGFPIEYVPLAEVHGGAQCPVLLTPQFVIAEAVDGASTDEVAKIIERRALRQRVAKAWRMFKFAPISCFGFVGPVGLAYLRKLVLDTLGITRPVPHPAQFGLDARTREHVAPILEPGLIGDRPTGMTLEQRVAAAAGALKAMSLTDNFARIVLLAGHGSTTVNNPHATGLDCGACGGHTGEANVRVAVRILNDPAVRTKLKEQGIVIPDDTVFVAALHDTTTDDITIFDKHMIPASHADDLKRLEADLAAAGRLARAERAALLKIDRKADIDRQVRQRSKDWSQVRPEWGLAGCAAFIAAPRDRTAGIKLDGRSFLHSYTWQQDSDFSVLELIMTAPMIVASWINLQYYGSTVDNRLFGSGNKTLHNVVGTLGVLEGNAGDLRVGLPWQSVHDGENYVHEPMRLHVLIEAPIPAMTAIIAKHEQVRQLLDNGWLYLFALDDRGVVTHKYAGNLQWEPV</sequence>
<gene>
    <name evidence="1" type="primary">dabA</name>
    <name type="ordered locus">Caur_1777</name>
</gene>
<name>DABA_CHLAA</name>
<evidence type="ECO:0000255" key="1">
    <source>
        <dbReference type="HAMAP-Rule" id="MF_01871"/>
    </source>
</evidence>
<dbReference type="EMBL" id="CP000909">
    <property type="protein sequence ID" value="ABY34994.1"/>
    <property type="molecule type" value="Genomic_DNA"/>
</dbReference>
<dbReference type="RefSeq" id="WP_012257648.1">
    <property type="nucleotide sequence ID" value="NC_010175.1"/>
</dbReference>
<dbReference type="RefSeq" id="YP_001635383.1">
    <property type="nucleotide sequence ID" value="NC_010175.1"/>
</dbReference>
<dbReference type="SMR" id="A9WCK3"/>
<dbReference type="FunCoup" id="A9WCK3">
    <property type="interactions" value="17"/>
</dbReference>
<dbReference type="STRING" id="324602.Caur_1777"/>
<dbReference type="EnsemblBacteria" id="ABY34994">
    <property type="protein sequence ID" value="ABY34994"/>
    <property type="gene ID" value="Caur_1777"/>
</dbReference>
<dbReference type="KEGG" id="cau:Caur_1777"/>
<dbReference type="PATRIC" id="fig|324602.8.peg.2027"/>
<dbReference type="eggNOG" id="COG3002">
    <property type="taxonomic scope" value="Bacteria"/>
</dbReference>
<dbReference type="HOGENOM" id="CLU_009885_1_0_0"/>
<dbReference type="InParanoid" id="A9WCK3"/>
<dbReference type="Proteomes" id="UP000002008">
    <property type="component" value="Chromosome"/>
</dbReference>
<dbReference type="GO" id="GO:0005886">
    <property type="term" value="C:plasma membrane"/>
    <property type="evidence" value="ECO:0007669"/>
    <property type="project" value="UniProtKB-SubCell"/>
</dbReference>
<dbReference type="GO" id="GO:0008270">
    <property type="term" value="F:zinc ion binding"/>
    <property type="evidence" value="ECO:0007669"/>
    <property type="project" value="UniProtKB-UniRule"/>
</dbReference>
<dbReference type="HAMAP" id="MF_01871">
    <property type="entry name" value="DabA"/>
    <property type="match status" value="1"/>
</dbReference>
<dbReference type="InterPro" id="IPR018752">
    <property type="entry name" value="DabA"/>
</dbReference>
<dbReference type="PANTHER" id="PTHR38344:SF1">
    <property type="entry name" value="INORGANIC CARBON TRANSPORTER SUBUNIT DABA-RELATED"/>
    <property type="match status" value="1"/>
</dbReference>
<dbReference type="PANTHER" id="PTHR38344">
    <property type="entry name" value="UPF0753 PROTEIN AQ_863"/>
    <property type="match status" value="1"/>
</dbReference>
<dbReference type="Pfam" id="PF10070">
    <property type="entry name" value="DabA"/>
    <property type="match status" value="1"/>
</dbReference>
<reference key="1">
    <citation type="journal article" date="2011" name="BMC Genomics">
        <title>Complete genome sequence of the filamentous anoxygenic phototrophic bacterium Chloroflexus aurantiacus.</title>
        <authorList>
            <person name="Tang K.H."/>
            <person name="Barry K."/>
            <person name="Chertkov O."/>
            <person name="Dalin E."/>
            <person name="Han C.S."/>
            <person name="Hauser L.J."/>
            <person name="Honchak B.M."/>
            <person name="Karbach L.E."/>
            <person name="Land M.L."/>
            <person name="Lapidus A."/>
            <person name="Larimer F.W."/>
            <person name="Mikhailova N."/>
            <person name="Pitluck S."/>
            <person name="Pierson B.K."/>
            <person name="Blankenship R.E."/>
        </authorList>
    </citation>
    <scope>NUCLEOTIDE SEQUENCE [LARGE SCALE GENOMIC DNA]</scope>
    <source>
        <strain>ATCC 29366 / DSM 635 / J-10-fl</strain>
    </source>
</reference>
<comment type="function">
    <text evidence="1">Part of an energy-coupled inorganic carbon pump.</text>
</comment>
<comment type="cofactor">
    <cofactor evidence="1">
        <name>Zn(2+)</name>
        <dbReference type="ChEBI" id="CHEBI:29105"/>
    </cofactor>
</comment>
<comment type="subunit">
    <text evidence="1">Forms a complex with DabB.</text>
</comment>
<comment type="subcellular location">
    <subcellularLocation>
        <location evidence="1">Cell membrane</location>
        <topology evidence="1">Peripheral membrane protein</topology>
    </subcellularLocation>
</comment>
<comment type="similarity">
    <text evidence="1">Belongs to the inorganic carbon transporter (TC 9.A.2) DabA family.</text>
</comment>
<protein>
    <recommendedName>
        <fullName evidence="1">Probable inorganic carbon transporter subunit DabA</fullName>
    </recommendedName>
</protein>
<organism>
    <name type="scientific">Chloroflexus aurantiacus (strain ATCC 29366 / DSM 635 / J-10-fl)</name>
    <dbReference type="NCBI Taxonomy" id="324602"/>
    <lineage>
        <taxon>Bacteria</taxon>
        <taxon>Bacillati</taxon>
        <taxon>Chloroflexota</taxon>
        <taxon>Chloroflexia</taxon>
        <taxon>Chloroflexales</taxon>
        <taxon>Chloroflexineae</taxon>
        <taxon>Chloroflexaceae</taxon>
        <taxon>Chloroflexus</taxon>
    </lineage>
</organism>
<proteinExistence type="inferred from homology"/>
<keyword id="KW-1003">Cell membrane</keyword>
<keyword id="KW-0472">Membrane</keyword>
<keyword id="KW-0479">Metal-binding</keyword>
<keyword id="KW-1185">Reference proteome</keyword>
<keyword id="KW-0813">Transport</keyword>
<keyword id="KW-0862">Zinc</keyword>
<accession>A9WCK3</accession>
<feature type="chain" id="PRO_0000387258" description="Probable inorganic carbon transporter subunit DabA">
    <location>
        <begin position="1"/>
        <end position="838"/>
    </location>
</feature>
<feature type="binding site" evidence="1">
    <location>
        <position position="353"/>
    </location>
    <ligand>
        <name>Zn(2+)</name>
        <dbReference type="ChEBI" id="CHEBI:29105"/>
    </ligand>
</feature>
<feature type="binding site" evidence="1">
    <location>
        <position position="355"/>
    </location>
    <ligand>
        <name>Zn(2+)</name>
        <dbReference type="ChEBI" id="CHEBI:29105"/>
    </ligand>
</feature>
<feature type="binding site" evidence="1">
    <location>
        <position position="537"/>
    </location>
    <ligand>
        <name>Zn(2+)</name>
        <dbReference type="ChEBI" id="CHEBI:29105"/>
    </ligand>
</feature>
<feature type="binding site" evidence="1">
    <location>
        <position position="552"/>
    </location>
    <ligand>
        <name>Zn(2+)</name>
        <dbReference type="ChEBI" id="CHEBI:29105"/>
    </ligand>
</feature>